<protein>
    <recommendedName>
        <fullName evidence="1">Siroheme synthase</fullName>
    </recommendedName>
    <domain>
        <recommendedName>
            <fullName evidence="1">Uroporphyrinogen-III C-methyltransferase</fullName>
            <shortName evidence="1">Urogen III methylase</shortName>
            <ecNumber evidence="1">2.1.1.107</ecNumber>
        </recommendedName>
        <alternativeName>
            <fullName evidence="1">SUMT</fullName>
        </alternativeName>
        <alternativeName>
            <fullName evidence="1">Uroporphyrinogen III methylase</fullName>
            <shortName evidence="1">UROM</shortName>
        </alternativeName>
    </domain>
    <domain>
        <recommendedName>
            <fullName evidence="1">Precorrin-2 dehydrogenase</fullName>
            <ecNumber evidence="1">1.3.1.76</ecNumber>
        </recommendedName>
    </domain>
    <domain>
        <recommendedName>
            <fullName evidence="1">Sirohydrochlorin ferrochelatase</fullName>
            <ecNumber evidence="1">4.99.1.4</ecNumber>
        </recommendedName>
    </domain>
</protein>
<keyword id="KW-0169">Cobalamin biosynthesis</keyword>
<keyword id="KW-0456">Lyase</keyword>
<keyword id="KW-0489">Methyltransferase</keyword>
<keyword id="KW-0511">Multifunctional enzyme</keyword>
<keyword id="KW-0520">NAD</keyword>
<keyword id="KW-0560">Oxidoreductase</keyword>
<keyword id="KW-0597">Phosphoprotein</keyword>
<keyword id="KW-0627">Porphyrin biosynthesis</keyword>
<keyword id="KW-1185">Reference proteome</keyword>
<keyword id="KW-0949">S-adenosyl-L-methionine</keyword>
<keyword id="KW-0808">Transferase</keyword>
<evidence type="ECO:0000255" key="1">
    <source>
        <dbReference type="HAMAP-Rule" id="MF_01646"/>
    </source>
</evidence>
<name>CYSG_PSESM</name>
<sequence>MEFLPLFHNLRGSRVLVVGGGEIALRKSRLIADAGAVLRVVAPEIETQLRELVAHSGGELILRGYSESDLDGCVLIIAATDDEPLNAQVSRDARLRCVPVNVVDAPALCTVIFPAIVDRSPLVIAVSSGGDAPVLARLIRAKLETWIPSSYGQLAGLAARFRNQVKGLLPNVQQRRAFWEEVFQGAIADRQLAGQGAEAERLLIAKIAGEPPAQTGEVYLVGAGPGDPDLLTFRALRLMQQADVVLYDRLVAPTILDLCRRDAERVYVGKRRAEHAVPQEQINQQLVALAKQGKRVVRLKGGDPFIFGRGGEEIEELAAHGIPFQVVPGITAASGCAAYAGIPLTHRDHAQSVRFITGHLKNGTTDLPWSDLVAPAQTLVFYMGLIGLPVICAELIKHGRSADTPAALVQQGTTVNQRVFTGTLANLPQLVAEHEVHAPTLVIIGEVVKLREKLAWFEGAQATL</sequence>
<comment type="function">
    <text evidence="1">Multifunctional enzyme that catalyzes the SAM-dependent methylations of uroporphyrinogen III at position C-2 and C-7 to form precorrin-2 via precorrin-1. Then it catalyzes the NAD-dependent ring dehydrogenation of precorrin-2 to yield sirohydrochlorin. Finally, it catalyzes the ferrochelation of sirohydrochlorin to yield siroheme.</text>
</comment>
<comment type="catalytic activity">
    <reaction evidence="1">
        <text>uroporphyrinogen III + 2 S-adenosyl-L-methionine = precorrin-2 + 2 S-adenosyl-L-homocysteine + H(+)</text>
        <dbReference type="Rhea" id="RHEA:32459"/>
        <dbReference type="ChEBI" id="CHEBI:15378"/>
        <dbReference type="ChEBI" id="CHEBI:57308"/>
        <dbReference type="ChEBI" id="CHEBI:57856"/>
        <dbReference type="ChEBI" id="CHEBI:58827"/>
        <dbReference type="ChEBI" id="CHEBI:59789"/>
        <dbReference type="EC" id="2.1.1.107"/>
    </reaction>
</comment>
<comment type="catalytic activity">
    <reaction evidence="1">
        <text>precorrin-2 + NAD(+) = sirohydrochlorin + NADH + 2 H(+)</text>
        <dbReference type="Rhea" id="RHEA:15613"/>
        <dbReference type="ChEBI" id="CHEBI:15378"/>
        <dbReference type="ChEBI" id="CHEBI:57540"/>
        <dbReference type="ChEBI" id="CHEBI:57945"/>
        <dbReference type="ChEBI" id="CHEBI:58351"/>
        <dbReference type="ChEBI" id="CHEBI:58827"/>
        <dbReference type="EC" id="1.3.1.76"/>
    </reaction>
</comment>
<comment type="catalytic activity">
    <reaction evidence="1">
        <text>siroheme + 2 H(+) = sirohydrochlorin + Fe(2+)</text>
        <dbReference type="Rhea" id="RHEA:24360"/>
        <dbReference type="ChEBI" id="CHEBI:15378"/>
        <dbReference type="ChEBI" id="CHEBI:29033"/>
        <dbReference type="ChEBI" id="CHEBI:58351"/>
        <dbReference type="ChEBI" id="CHEBI:60052"/>
        <dbReference type="EC" id="4.99.1.4"/>
    </reaction>
</comment>
<comment type="pathway">
    <text evidence="1">Cofactor biosynthesis; adenosylcobalamin biosynthesis; precorrin-2 from uroporphyrinogen III: step 1/1.</text>
</comment>
<comment type="pathway">
    <text evidence="1">Cofactor biosynthesis; adenosylcobalamin biosynthesis; sirohydrochlorin from precorrin-2: step 1/1.</text>
</comment>
<comment type="pathway">
    <text evidence="1">Porphyrin-containing compound metabolism; siroheme biosynthesis; precorrin-2 from uroporphyrinogen III: step 1/1.</text>
</comment>
<comment type="pathway">
    <text evidence="1">Porphyrin-containing compound metabolism; siroheme biosynthesis; siroheme from sirohydrochlorin: step 1/1.</text>
</comment>
<comment type="pathway">
    <text evidence="1">Porphyrin-containing compound metabolism; siroheme biosynthesis; sirohydrochlorin from precorrin-2: step 1/1.</text>
</comment>
<comment type="similarity">
    <text evidence="1">In the N-terminal section; belongs to the precorrin-2 dehydrogenase / sirohydrochlorin ferrochelatase family.</text>
</comment>
<comment type="similarity">
    <text evidence="1">In the C-terminal section; belongs to the precorrin methyltransferase family.</text>
</comment>
<reference key="1">
    <citation type="journal article" date="2003" name="Proc. Natl. Acad. Sci. U.S.A.">
        <title>The complete genome sequence of the Arabidopsis and tomato pathogen Pseudomonas syringae pv. tomato DC3000.</title>
        <authorList>
            <person name="Buell C.R."/>
            <person name="Joardar V."/>
            <person name="Lindeberg M."/>
            <person name="Selengut J."/>
            <person name="Paulsen I.T."/>
            <person name="Gwinn M.L."/>
            <person name="Dodson R.J."/>
            <person name="DeBoy R.T."/>
            <person name="Durkin A.S."/>
            <person name="Kolonay J.F."/>
            <person name="Madupu R."/>
            <person name="Daugherty S.C."/>
            <person name="Brinkac L.M."/>
            <person name="Beanan M.J."/>
            <person name="Haft D.H."/>
            <person name="Nelson W.C."/>
            <person name="Davidsen T.M."/>
            <person name="Zafar N."/>
            <person name="Zhou L."/>
            <person name="Liu J."/>
            <person name="Yuan Q."/>
            <person name="Khouri H.M."/>
            <person name="Fedorova N.B."/>
            <person name="Tran B."/>
            <person name="Russell D."/>
            <person name="Berry K.J."/>
            <person name="Utterback T.R."/>
            <person name="Van Aken S.E."/>
            <person name="Feldblyum T.V."/>
            <person name="D'Ascenzo M."/>
            <person name="Deng W.-L."/>
            <person name="Ramos A.R."/>
            <person name="Alfano J.R."/>
            <person name="Cartinhour S."/>
            <person name="Chatterjee A.K."/>
            <person name="Delaney T.P."/>
            <person name="Lazarowitz S.G."/>
            <person name="Martin G.B."/>
            <person name="Schneider D.J."/>
            <person name="Tang X."/>
            <person name="Bender C.L."/>
            <person name="White O."/>
            <person name="Fraser C.M."/>
            <person name="Collmer A."/>
        </authorList>
    </citation>
    <scope>NUCLEOTIDE SEQUENCE [LARGE SCALE GENOMIC DNA]</scope>
    <source>
        <strain>ATCC BAA-871 / DC3000</strain>
    </source>
</reference>
<feature type="chain" id="PRO_0000330545" description="Siroheme synthase">
    <location>
        <begin position="1"/>
        <end position="464"/>
    </location>
</feature>
<feature type="region of interest" description="Precorrin-2 dehydrogenase /sirohydrochlorin ferrochelatase" evidence="1">
    <location>
        <begin position="1"/>
        <end position="203"/>
    </location>
</feature>
<feature type="region of interest" description="Uroporphyrinogen-III C-methyltransferase" evidence="1">
    <location>
        <begin position="216"/>
        <end position="464"/>
    </location>
</feature>
<feature type="active site" description="Proton acceptor" evidence="1">
    <location>
        <position position="248"/>
    </location>
</feature>
<feature type="active site" description="Proton donor" evidence="1">
    <location>
        <position position="270"/>
    </location>
</feature>
<feature type="binding site" evidence="1">
    <location>
        <begin position="22"/>
        <end position="23"/>
    </location>
    <ligand>
        <name>NAD(+)</name>
        <dbReference type="ChEBI" id="CHEBI:57540"/>
    </ligand>
</feature>
<feature type="binding site" evidence="1">
    <location>
        <begin position="43"/>
        <end position="44"/>
    </location>
    <ligand>
        <name>NAD(+)</name>
        <dbReference type="ChEBI" id="CHEBI:57540"/>
    </ligand>
</feature>
<feature type="binding site" evidence="1">
    <location>
        <position position="225"/>
    </location>
    <ligand>
        <name>S-adenosyl-L-methionine</name>
        <dbReference type="ChEBI" id="CHEBI:59789"/>
    </ligand>
</feature>
<feature type="binding site" evidence="1">
    <location>
        <begin position="301"/>
        <end position="303"/>
    </location>
    <ligand>
        <name>S-adenosyl-L-methionine</name>
        <dbReference type="ChEBI" id="CHEBI:59789"/>
    </ligand>
</feature>
<feature type="binding site" evidence="1">
    <location>
        <position position="306"/>
    </location>
    <ligand>
        <name>S-adenosyl-L-methionine</name>
        <dbReference type="ChEBI" id="CHEBI:59789"/>
    </ligand>
</feature>
<feature type="binding site" evidence="1">
    <location>
        <begin position="331"/>
        <end position="332"/>
    </location>
    <ligand>
        <name>S-adenosyl-L-methionine</name>
        <dbReference type="ChEBI" id="CHEBI:59789"/>
    </ligand>
</feature>
<feature type="binding site" evidence="1">
    <location>
        <position position="383"/>
    </location>
    <ligand>
        <name>S-adenosyl-L-methionine</name>
        <dbReference type="ChEBI" id="CHEBI:59789"/>
    </ligand>
</feature>
<feature type="binding site" evidence="1">
    <location>
        <position position="412"/>
    </location>
    <ligand>
        <name>S-adenosyl-L-methionine</name>
        <dbReference type="ChEBI" id="CHEBI:59789"/>
    </ligand>
</feature>
<feature type="modified residue" description="Phosphoserine" evidence="1">
    <location>
        <position position="128"/>
    </location>
</feature>
<accession>Q87ZT0</accession>
<dbReference type="EC" id="2.1.1.107" evidence="1"/>
<dbReference type="EC" id="1.3.1.76" evidence="1"/>
<dbReference type="EC" id="4.99.1.4" evidence="1"/>
<dbReference type="EMBL" id="AE016853">
    <property type="protein sequence ID" value="AAO56822.1"/>
    <property type="molecule type" value="Genomic_DNA"/>
</dbReference>
<dbReference type="RefSeq" id="NP_793127.1">
    <property type="nucleotide sequence ID" value="NC_004578.1"/>
</dbReference>
<dbReference type="RefSeq" id="WP_005618952.1">
    <property type="nucleotide sequence ID" value="NC_004578.1"/>
</dbReference>
<dbReference type="SMR" id="Q87ZT0"/>
<dbReference type="STRING" id="223283.PSPTO_3344"/>
<dbReference type="GeneID" id="1185003"/>
<dbReference type="KEGG" id="pst:PSPTO_3344"/>
<dbReference type="PATRIC" id="fig|223283.9.peg.3423"/>
<dbReference type="eggNOG" id="COG0007">
    <property type="taxonomic scope" value="Bacteria"/>
</dbReference>
<dbReference type="eggNOG" id="COG1648">
    <property type="taxonomic scope" value="Bacteria"/>
</dbReference>
<dbReference type="HOGENOM" id="CLU_011276_2_2_6"/>
<dbReference type="OrthoDB" id="9815856at2"/>
<dbReference type="PhylomeDB" id="Q87ZT0"/>
<dbReference type="UniPathway" id="UPA00148">
    <property type="reaction ID" value="UER00211"/>
</dbReference>
<dbReference type="UniPathway" id="UPA00148">
    <property type="reaction ID" value="UER00222"/>
</dbReference>
<dbReference type="UniPathway" id="UPA00262">
    <property type="reaction ID" value="UER00211"/>
</dbReference>
<dbReference type="UniPathway" id="UPA00262">
    <property type="reaction ID" value="UER00222"/>
</dbReference>
<dbReference type="UniPathway" id="UPA00262">
    <property type="reaction ID" value="UER00376"/>
</dbReference>
<dbReference type="Proteomes" id="UP000002515">
    <property type="component" value="Chromosome"/>
</dbReference>
<dbReference type="GO" id="GO:0051287">
    <property type="term" value="F:NAD binding"/>
    <property type="evidence" value="ECO:0007669"/>
    <property type="project" value="InterPro"/>
</dbReference>
<dbReference type="GO" id="GO:0043115">
    <property type="term" value="F:precorrin-2 dehydrogenase activity"/>
    <property type="evidence" value="ECO:0007669"/>
    <property type="project" value="UniProtKB-UniRule"/>
</dbReference>
<dbReference type="GO" id="GO:0051266">
    <property type="term" value="F:sirohydrochlorin ferrochelatase activity"/>
    <property type="evidence" value="ECO:0007669"/>
    <property type="project" value="UniProtKB-EC"/>
</dbReference>
<dbReference type="GO" id="GO:0004851">
    <property type="term" value="F:uroporphyrin-III C-methyltransferase activity"/>
    <property type="evidence" value="ECO:0007669"/>
    <property type="project" value="UniProtKB-UniRule"/>
</dbReference>
<dbReference type="GO" id="GO:0009236">
    <property type="term" value="P:cobalamin biosynthetic process"/>
    <property type="evidence" value="ECO:0007669"/>
    <property type="project" value="UniProtKB-UniRule"/>
</dbReference>
<dbReference type="GO" id="GO:0032259">
    <property type="term" value="P:methylation"/>
    <property type="evidence" value="ECO:0007669"/>
    <property type="project" value="UniProtKB-KW"/>
</dbReference>
<dbReference type="GO" id="GO:0019354">
    <property type="term" value="P:siroheme biosynthetic process"/>
    <property type="evidence" value="ECO:0007669"/>
    <property type="project" value="UniProtKB-UniRule"/>
</dbReference>
<dbReference type="CDD" id="cd11642">
    <property type="entry name" value="SUMT"/>
    <property type="match status" value="1"/>
</dbReference>
<dbReference type="FunFam" id="3.30.160.110:FF:000001">
    <property type="entry name" value="Siroheme synthase"/>
    <property type="match status" value="1"/>
</dbReference>
<dbReference type="FunFam" id="3.30.950.10:FF:000001">
    <property type="entry name" value="Siroheme synthase"/>
    <property type="match status" value="1"/>
</dbReference>
<dbReference type="FunFam" id="3.40.1010.10:FF:000001">
    <property type="entry name" value="Siroheme synthase"/>
    <property type="match status" value="1"/>
</dbReference>
<dbReference type="Gene3D" id="3.40.1010.10">
    <property type="entry name" value="Cobalt-precorrin-4 Transmethylase, Domain 1"/>
    <property type="match status" value="1"/>
</dbReference>
<dbReference type="Gene3D" id="3.30.950.10">
    <property type="entry name" value="Methyltransferase, Cobalt-precorrin-4 Transmethylase, Domain 2"/>
    <property type="match status" value="1"/>
</dbReference>
<dbReference type="Gene3D" id="3.40.50.720">
    <property type="entry name" value="NAD(P)-binding Rossmann-like Domain"/>
    <property type="match status" value="1"/>
</dbReference>
<dbReference type="Gene3D" id="1.10.8.210">
    <property type="entry name" value="Sirohaem synthase, dimerisation domain"/>
    <property type="match status" value="1"/>
</dbReference>
<dbReference type="Gene3D" id="3.30.160.110">
    <property type="entry name" value="Siroheme synthase, domain 2"/>
    <property type="match status" value="1"/>
</dbReference>
<dbReference type="HAMAP" id="MF_01646">
    <property type="entry name" value="Siroheme_synth"/>
    <property type="match status" value="1"/>
</dbReference>
<dbReference type="InterPro" id="IPR000878">
    <property type="entry name" value="4pyrrol_Mease"/>
</dbReference>
<dbReference type="InterPro" id="IPR035996">
    <property type="entry name" value="4pyrrol_Methylase_sf"/>
</dbReference>
<dbReference type="InterPro" id="IPR014777">
    <property type="entry name" value="4pyrrole_Mease_sub1"/>
</dbReference>
<dbReference type="InterPro" id="IPR014776">
    <property type="entry name" value="4pyrrole_Mease_sub2"/>
</dbReference>
<dbReference type="InterPro" id="IPR006366">
    <property type="entry name" value="CobA/CysG_C"/>
</dbReference>
<dbReference type="InterPro" id="IPR036291">
    <property type="entry name" value="NAD(P)-bd_dom_sf"/>
</dbReference>
<dbReference type="InterPro" id="IPR050161">
    <property type="entry name" value="Siro_Cobalamin_biosynth"/>
</dbReference>
<dbReference type="InterPro" id="IPR037115">
    <property type="entry name" value="Sirohaem_synt_dimer_dom_sf"/>
</dbReference>
<dbReference type="InterPro" id="IPR012409">
    <property type="entry name" value="Sirohaem_synth"/>
</dbReference>
<dbReference type="InterPro" id="IPR028281">
    <property type="entry name" value="Sirohaem_synthase_central"/>
</dbReference>
<dbReference type="InterPro" id="IPR019478">
    <property type="entry name" value="Sirohaem_synthase_dimer_dom"/>
</dbReference>
<dbReference type="InterPro" id="IPR006367">
    <property type="entry name" value="Sirohaem_synthase_N"/>
</dbReference>
<dbReference type="InterPro" id="IPR003043">
    <property type="entry name" value="Uropor_MeTrfase_CS"/>
</dbReference>
<dbReference type="NCBIfam" id="TIGR01469">
    <property type="entry name" value="cobA_cysG_Cterm"/>
    <property type="match status" value="1"/>
</dbReference>
<dbReference type="NCBIfam" id="TIGR01470">
    <property type="entry name" value="cysG_Nterm"/>
    <property type="match status" value="1"/>
</dbReference>
<dbReference type="NCBIfam" id="NF004790">
    <property type="entry name" value="PRK06136.1"/>
    <property type="match status" value="1"/>
</dbReference>
<dbReference type="NCBIfam" id="NF007922">
    <property type="entry name" value="PRK10637.1"/>
    <property type="match status" value="1"/>
</dbReference>
<dbReference type="PANTHER" id="PTHR45790:SF1">
    <property type="entry name" value="SIROHEME SYNTHASE"/>
    <property type="match status" value="1"/>
</dbReference>
<dbReference type="PANTHER" id="PTHR45790">
    <property type="entry name" value="SIROHEME SYNTHASE-RELATED"/>
    <property type="match status" value="1"/>
</dbReference>
<dbReference type="Pfam" id="PF10414">
    <property type="entry name" value="CysG_dimeriser"/>
    <property type="match status" value="1"/>
</dbReference>
<dbReference type="Pfam" id="PF13241">
    <property type="entry name" value="NAD_binding_7"/>
    <property type="match status" value="1"/>
</dbReference>
<dbReference type="Pfam" id="PF14824">
    <property type="entry name" value="Sirohm_synth_M"/>
    <property type="match status" value="1"/>
</dbReference>
<dbReference type="Pfam" id="PF00590">
    <property type="entry name" value="TP_methylase"/>
    <property type="match status" value="1"/>
</dbReference>
<dbReference type="PIRSF" id="PIRSF036426">
    <property type="entry name" value="Sirohaem_synth"/>
    <property type="match status" value="1"/>
</dbReference>
<dbReference type="SUPFAM" id="SSF51735">
    <property type="entry name" value="NAD(P)-binding Rossmann-fold domains"/>
    <property type="match status" value="1"/>
</dbReference>
<dbReference type="SUPFAM" id="SSF75615">
    <property type="entry name" value="Siroheme synthase middle domains-like"/>
    <property type="match status" value="1"/>
</dbReference>
<dbReference type="SUPFAM" id="SSF53790">
    <property type="entry name" value="Tetrapyrrole methylase"/>
    <property type="match status" value="1"/>
</dbReference>
<dbReference type="PROSITE" id="PS00840">
    <property type="entry name" value="SUMT_2"/>
    <property type="match status" value="1"/>
</dbReference>
<gene>
    <name evidence="1" type="primary">cysG</name>
    <name type="synonym">pspTO3344</name>
    <name type="ordered locus">PSPTO_3344</name>
</gene>
<organism>
    <name type="scientific">Pseudomonas syringae pv. tomato (strain ATCC BAA-871 / DC3000)</name>
    <dbReference type="NCBI Taxonomy" id="223283"/>
    <lineage>
        <taxon>Bacteria</taxon>
        <taxon>Pseudomonadati</taxon>
        <taxon>Pseudomonadota</taxon>
        <taxon>Gammaproteobacteria</taxon>
        <taxon>Pseudomonadales</taxon>
        <taxon>Pseudomonadaceae</taxon>
        <taxon>Pseudomonas</taxon>
    </lineage>
</organism>
<proteinExistence type="inferred from homology"/>